<organism>
    <name type="scientific">Stutzerimonas stutzeri (strain A1501)</name>
    <name type="common">Pseudomonas stutzeri</name>
    <dbReference type="NCBI Taxonomy" id="379731"/>
    <lineage>
        <taxon>Bacteria</taxon>
        <taxon>Pseudomonadati</taxon>
        <taxon>Pseudomonadota</taxon>
        <taxon>Gammaproteobacteria</taxon>
        <taxon>Pseudomonadales</taxon>
        <taxon>Pseudomonadaceae</taxon>
        <taxon>Stutzerimonas</taxon>
    </lineage>
</organism>
<reference key="1">
    <citation type="journal article" date="2008" name="Proc. Natl. Acad. Sci. U.S.A.">
        <title>Nitrogen fixation island and rhizosphere competence traits in the genome of root-associated Pseudomonas stutzeri A1501.</title>
        <authorList>
            <person name="Yan Y."/>
            <person name="Yang J."/>
            <person name="Dou Y."/>
            <person name="Chen M."/>
            <person name="Ping S."/>
            <person name="Peng J."/>
            <person name="Lu W."/>
            <person name="Zhang W."/>
            <person name="Yao Z."/>
            <person name="Li H."/>
            <person name="Liu W."/>
            <person name="He S."/>
            <person name="Geng L."/>
            <person name="Zhang X."/>
            <person name="Yang F."/>
            <person name="Yu H."/>
            <person name="Zhan Y."/>
            <person name="Li D."/>
            <person name="Lin Z."/>
            <person name="Wang Y."/>
            <person name="Elmerich C."/>
            <person name="Lin M."/>
            <person name="Jin Q."/>
        </authorList>
    </citation>
    <scope>NUCLEOTIDE SEQUENCE [LARGE SCALE GENOMIC DNA]</scope>
    <source>
        <strain>A1501</strain>
    </source>
</reference>
<dbReference type="EC" id="2.7.2.1" evidence="1"/>
<dbReference type="EMBL" id="CP000304">
    <property type="protein sequence ID" value="ABP78822.1"/>
    <property type="molecule type" value="Genomic_DNA"/>
</dbReference>
<dbReference type="RefSeq" id="WP_011912310.1">
    <property type="nucleotide sequence ID" value="NC_009434.1"/>
</dbReference>
<dbReference type="SMR" id="A4VIM1"/>
<dbReference type="KEGG" id="psa:PST_1127"/>
<dbReference type="eggNOG" id="COG0282">
    <property type="taxonomic scope" value="Bacteria"/>
</dbReference>
<dbReference type="HOGENOM" id="CLU_020352_0_1_6"/>
<dbReference type="UniPathway" id="UPA00340">
    <property type="reaction ID" value="UER00458"/>
</dbReference>
<dbReference type="Proteomes" id="UP000000233">
    <property type="component" value="Chromosome"/>
</dbReference>
<dbReference type="GO" id="GO:0005829">
    <property type="term" value="C:cytosol"/>
    <property type="evidence" value="ECO:0007669"/>
    <property type="project" value="TreeGrafter"/>
</dbReference>
<dbReference type="GO" id="GO:0008776">
    <property type="term" value="F:acetate kinase activity"/>
    <property type="evidence" value="ECO:0007669"/>
    <property type="project" value="UniProtKB-UniRule"/>
</dbReference>
<dbReference type="GO" id="GO:0005524">
    <property type="term" value="F:ATP binding"/>
    <property type="evidence" value="ECO:0007669"/>
    <property type="project" value="UniProtKB-KW"/>
</dbReference>
<dbReference type="GO" id="GO:0000287">
    <property type="term" value="F:magnesium ion binding"/>
    <property type="evidence" value="ECO:0007669"/>
    <property type="project" value="UniProtKB-UniRule"/>
</dbReference>
<dbReference type="GO" id="GO:0006083">
    <property type="term" value="P:acetate metabolic process"/>
    <property type="evidence" value="ECO:0007669"/>
    <property type="project" value="TreeGrafter"/>
</dbReference>
<dbReference type="GO" id="GO:0006085">
    <property type="term" value="P:acetyl-CoA biosynthetic process"/>
    <property type="evidence" value="ECO:0007669"/>
    <property type="project" value="UniProtKB-UniRule"/>
</dbReference>
<dbReference type="CDD" id="cd24010">
    <property type="entry name" value="ASKHA_NBD_AcK_PK"/>
    <property type="match status" value="1"/>
</dbReference>
<dbReference type="Gene3D" id="3.30.420.40">
    <property type="match status" value="2"/>
</dbReference>
<dbReference type="HAMAP" id="MF_00020">
    <property type="entry name" value="Acetate_kinase"/>
    <property type="match status" value="1"/>
</dbReference>
<dbReference type="InterPro" id="IPR004372">
    <property type="entry name" value="Ac/propionate_kinase"/>
</dbReference>
<dbReference type="InterPro" id="IPR000890">
    <property type="entry name" value="Aliphatic_acid_kin_short-chain"/>
</dbReference>
<dbReference type="InterPro" id="IPR023865">
    <property type="entry name" value="Aliphatic_acid_kinase_CS"/>
</dbReference>
<dbReference type="InterPro" id="IPR043129">
    <property type="entry name" value="ATPase_NBD"/>
</dbReference>
<dbReference type="NCBIfam" id="TIGR00016">
    <property type="entry name" value="ackA"/>
    <property type="match status" value="1"/>
</dbReference>
<dbReference type="PANTHER" id="PTHR21060">
    <property type="entry name" value="ACETATE KINASE"/>
    <property type="match status" value="1"/>
</dbReference>
<dbReference type="PANTHER" id="PTHR21060:SF21">
    <property type="entry name" value="ACETATE KINASE"/>
    <property type="match status" value="1"/>
</dbReference>
<dbReference type="Pfam" id="PF00871">
    <property type="entry name" value="Acetate_kinase"/>
    <property type="match status" value="1"/>
</dbReference>
<dbReference type="PIRSF" id="PIRSF000722">
    <property type="entry name" value="Acetate_prop_kin"/>
    <property type="match status" value="1"/>
</dbReference>
<dbReference type="PRINTS" id="PR00471">
    <property type="entry name" value="ACETATEKNASE"/>
</dbReference>
<dbReference type="SUPFAM" id="SSF53067">
    <property type="entry name" value="Actin-like ATPase domain"/>
    <property type="match status" value="2"/>
</dbReference>
<dbReference type="PROSITE" id="PS01075">
    <property type="entry name" value="ACETATE_KINASE_1"/>
    <property type="match status" value="1"/>
</dbReference>
<sequence length="395" mass="42068">MSARNILVINCGSSSIKFALVNEAQATFPLQGLAECIGSPEAVIHFESAAGKESVKVPNADHQAALAQILPRVEDAAGGHLDGIGHRVVHGGEKFFASTLLNDETLAGIEANIQLAPLHNPANLSGIHAAINLFPELPQVGVFDTAFHQTMPEHAYRYAVPDVLYKDHGVRRYGFHGTSHRYVSKRAAELAGVPVDNSSWLVAHLGNGCSTCAVVNGESRDTSMGLTPLEGLVMGTRSGDVDPSLHNFLHKTLGWDLAKIDNMLNKESGLKGLSGLSNDMRTLAEARQAGHPGAVLAFEVFCYRLAKSLAAMSCALPQLDGLVFTGGIGENSSAVRERTLEHLKLFGFKLDAEANARCTRGVAGEIQAQGSPRVMVVPTNEERQIALDTLALLDA</sequence>
<gene>
    <name evidence="1" type="primary">ackA</name>
    <name type="ordered locus">PST_1127</name>
</gene>
<evidence type="ECO:0000255" key="1">
    <source>
        <dbReference type="HAMAP-Rule" id="MF_00020"/>
    </source>
</evidence>
<protein>
    <recommendedName>
        <fullName evidence="1">Acetate kinase</fullName>
        <ecNumber evidence="1">2.7.2.1</ecNumber>
    </recommendedName>
    <alternativeName>
        <fullName evidence="1">Acetokinase</fullName>
    </alternativeName>
</protein>
<feature type="chain" id="PRO_1000002249" description="Acetate kinase">
    <location>
        <begin position="1"/>
        <end position="395"/>
    </location>
</feature>
<feature type="active site" description="Proton donor/acceptor" evidence="1">
    <location>
        <position position="144"/>
    </location>
</feature>
<feature type="binding site" evidence="1">
    <location>
        <position position="10"/>
    </location>
    <ligand>
        <name>Mg(2+)</name>
        <dbReference type="ChEBI" id="CHEBI:18420"/>
    </ligand>
</feature>
<feature type="binding site" evidence="1">
    <location>
        <position position="17"/>
    </location>
    <ligand>
        <name>ATP</name>
        <dbReference type="ChEBI" id="CHEBI:30616"/>
    </ligand>
</feature>
<feature type="binding site" evidence="1">
    <location>
        <position position="87"/>
    </location>
    <ligand>
        <name>substrate</name>
    </ligand>
</feature>
<feature type="binding site" evidence="1">
    <location>
        <begin position="204"/>
        <end position="208"/>
    </location>
    <ligand>
        <name>ATP</name>
        <dbReference type="ChEBI" id="CHEBI:30616"/>
    </ligand>
</feature>
<feature type="binding site" evidence="1">
    <location>
        <begin position="279"/>
        <end position="281"/>
    </location>
    <ligand>
        <name>ATP</name>
        <dbReference type="ChEBI" id="CHEBI:30616"/>
    </ligand>
</feature>
<feature type="binding site" evidence="1">
    <location>
        <begin position="327"/>
        <end position="331"/>
    </location>
    <ligand>
        <name>ATP</name>
        <dbReference type="ChEBI" id="CHEBI:30616"/>
    </ligand>
</feature>
<feature type="binding site" evidence="1">
    <location>
        <position position="381"/>
    </location>
    <ligand>
        <name>Mg(2+)</name>
        <dbReference type="ChEBI" id="CHEBI:18420"/>
    </ligand>
</feature>
<feature type="site" description="Transition state stabilizer" evidence="1">
    <location>
        <position position="176"/>
    </location>
</feature>
<feature type="site" description="Transition state stabilizer" evidence="1">
    <location>
        <position position="237"/>
    </location>
</feature>
<name>ACKA_STUS1</name>
<proteinExistence type="inferred from homology"/>
<accession>A4VIM1</accession>
<comment type="function">
    <text evidence="1">Catalyzes the formation of acetyl phosphate from acetate and ATP. Can also catalyze the reverse reaction.</text>
</comment>
<comment type="catalytic activity">
    <reaction evidence="1">
        <text>acetate + ATP = acetyl phosphate + ADP</text>
        <dbReference type="Rhea" id="RHEA:11352"/>
        <dbReference type="ChEBI" id="CHEBI:22191"/>
        <dbReference type="ChEBI" id="CHEBI:30089"/>
        <dbReference type="ChEBI" id="CHEBI:30616"/>
        <dbReference type="ChEBI" id="CHEBI:456216"/>
        <dbReference type="EC" id="2.7.2.1"/>
    </reaction>
</comment>
<comment type="cofactor">
    <cofactor evidence="1">
        <name>Mg(2+)</name>
        <dbReference type="ChEBI" id="CHEBI:18420"/>
    </cofactor>
    <cofactor evidence="1">
        <name>Mn(2+)</name>
        <dbReference type="ChEBI" id="CHEBI:29035"/>
    </cofactor>
    <text evidence="1">Mg(2+). Can also accept Mn(2+).</text>
</comment>
<comment type="pathway">
    <text evidence="1">Metabolic intermediate biosynthesis; acetyl-CoA biosynthesis; acetyl-CoA from acetate: step 1/2.</text>
</comment>
<comment type="subunit">
    <text evidence="1">Homodimer.</text>
</comment>
<comment type="subcellular location">
    <subcellularLocation>
        <location evidence="1">Cytoplasm</location>
    </subcellularLocation>
</comment>
<comment type="similarity">
    <text evidence="1">Belongs to the acetokinase family.</text>
</comment>
<keyword id="KW-0067">ATP-binding</keyword>
<keyword id="KW-0963">Cytoplasm</keyword>
<keyword id="KW-0418">Kinase</keyword>
<keyword id="KW-0460">Magnesium</keyword>
<keyword id="KW-0479">Metal-binding</keyword>
<keyword id="KW-0547">Nucleotide-binding</keyword>
<keyword id="KW-1185">Reference proteome</keyword>
<keyword id="KW-0808">Transferase</keyword>